<name>LSPA_BURO0</name>
<dbReference type="EC" id="3.4.23.36" evidence="1"/>
<dbReference type="EMBL" id="CP000958">
    <property type="protein sequence ID" value="ACA91699.1"/>
    <property type="molecule type" value="Genomic_DNA"/>
</dbReference>
<dbReference type="RefSeq" id="WP_006478035.1">
    <property type="nucleotide sequence ID" value="NC_010508.1"/>
</dbReference>
<dbReference type="SMR" id="B1JXC4"/>
<dbReference type="GeneID" id="83049327"/>
<dbReference type="KEGG" id="bcm:Bcenmc03_2538"/>
<dbReference type="HOGENOM" id="CLU_083252_4_0_4"/>
<dbReference type="UniPathway" id="UPA00665"/>
<dbReference type="Proteomes" id="UP000002169">
    <property type="component" value="Chromosome 1"/>
</dbReference>
<dbReference type="GO" id="GO:0005886">
    <property type="term" value="C:plasma membrane"/>
    <property type="evidence" value="ECO:0007669"/>
    <property type="project" value="UniProtKB-SubCell"/>
</dbReference>
<dbReference type="GO" id="GO:0004190">
    <property type="term" value="F:aspartic-type endopeptidase activity"/>
    <property type="evidence" value="ECO:0007669"/>
    <property type="project" value="UniProtKB-UniRule"/>
</dbReference>
<dbReference type="GO" id="GO:0006508">
    <property type="term" value="P:proteolysis"/>
    <property type="evidence" value="ECO:0007669"/>
    <property type="project" value="UniProtKB-KW"/>
</dbReference>
<dbReference type="HAMAP" id="MF_00161">
    <property type="entry name" value="LspA"/>
    <property type="match status" value="1"/>
</dbReference>
<dbReference type="InterPro" id="IPR001872">
    <property type="entry name" value="Peptidase_A8"/>
</dbReference>
<dbReference type="NCBIfam" id="TIGR00077">
    <property type="entry name" value="lspA"/>
    <property type="match status" value="1"/>
</dbReference>
<dbReference type="PANTHER" id="PTHR33695">
    <property type="entry name" value="LIPOPROTEIN SIGNAL PEPTIDASE"/>
    <property type="match status" value="1"/>
</dbReference>
<dbReference type="PANTHER" id="PTHR33695:SF1">
    <property type="entry name" value="LIPOPROTEIN SIGNAL PEPTIDASE"/>
    <property type="match status" value="1"/>
</dbReference>
<dbReference type="Pfam" id="PF01252">
    <property type="entry name" value="Peptidase_A8"/>
    <property type="match status" value="1"/>
</dbReference>
<dbReference type="PRINTS" id="PR00781">
    <property type="entry name" value="LIPOSIGPTASE"/>
</dbReference>
<dbReference type="PROSITE" id="PS00855">
    <property type="entry name" value="SPASE_II"/>
    <property type="match status" value="1"/>
</dbReference>
<sequence>MAKTLSKPASGALAPWLGISLIVILFDQLSKIAILKTFAYGAQHALTSFFNLVLVYNRGAAFGFLSTASGWQRWAFTALGVGATLVICFLLKRHGHQRLFSVSLALILGGALGNVIDRLVYGHVIDFLDFHLGAWHFPAFNLADSAITVGAVLLIYDELRRVRGAR</sequence>
<feature type="chain" id="PRO_1000097236" description="Lipoprotein signal peptidase">
    <location>
        <begin position="1"/>
        <end position="166"/>
    </location>
</feature>
<feature type="transmembrane region" description="Helical" evidence="1">
    <location>
        <begin position="9"/>
        <end position="29"/>
    </location>
</feature>
<feature type="transmembrane region" description="Helical" evidence="1">
    <location>
        <begin position="45"/>
        <end position="65"/>
    </location>
</feature>
<feature type="transmembrane region" description="Helical" evidence="1">
    <location>
        <begin position="71"/>
        <end position="91"/>
    </location>
</feature>
<feature type="transmembrane region" description="Helical" evidence="1">
    <location>
        <begin position="100"/>
        <end position="120"/>
    </location>
</feature>
<feature type="transmembrane region" description="Helical" evidence="1">
    <location>
        <begin position="135"/>
        <end position="155"/>
    </location>
</feature>
<feature type="active site" evidence="1">
    <location>
        <position position="126"/>
    </location>
</feature>
<feature type="active site" evidence="1">
    <location>
        <position position="144"/>
    </location>
</feature>
<reference key="1">
    <citation type="submission" date="2008-02" db="EMBL/GenBank/DDBJ databases">
        <title>Complete sequence of chromosome 1 of Burkholderia cenocepacia MC0-3.</title>
        <authorList>
            <person name="Copeland A."/>
            <person name="Lucas S."/>
            <person name="Lapidus A."/>
            <person name="Barry K."/>
            <person name="Bruce D."/>
            <person name="Goodwin L."/>
            <person name="Glavina del Rio T."/>
            <person name="Dalin E."/>
            <person name="Tice H."/>
            <person name="Pitluck S."/>
            <person name="Chain P."/>
            <person name="Malfatti S."/>
            <person name="Shin M."/>
            <person name="Vergez L."/>
            <person name="Schmutz J."/>
            <person name="Larimer F."/>
            <person name="Land M."/>
            <person name="Hauser L."/>
            <person name="Kyrpides N."/>
            <person name="Mikhailova N."/>
            <person name="Tiedje J."/>
            <person name="Richardson P."/>
        </authorList>
    </citation>
    <scope>NUCLEOTIDE SEQUENCE [LARGE SCALE GENOMIC DNA]</scope>
    <source>
        <strain>MC0-3</strain>
    </source>
</reference>
<protein>
    <recommendedName>
        <fullName evidence="1">Lipoprotein signal peptidase</fullName>
        <ecNumber evidence="1">3.4.23.36</ecNumber>
    </recommendedName>
    <alternativeName>
        <fullName evidence="1">Prolipoprotein signal peptidase</fullName>
    </alternativeName>
    <alternativeName>
        <fullName evidence="1">Signal peptidase II</fullName>
        <shortName evidence="1">SPase II</shortName>
    </alternativeName>
</protein>
<comment type="function">
    <text evidence="1">This protein specifically catalyzes the removal of signal peptides from prolipoproteins.</text>
</comment>
<comment type="catalytic activity">
    <reaction evidence="1">
        <text>Release of signal peptides from bacterial membrane prolipoproteins. Hydrolyzes -Xaa-Yaa-Zaa-|-(S,diacylglyceryl)Cys-, in which Xaa is hydrophobic (preferably Leu), and Yaa (Ala or Ser) and Zaa (Gly or Ala) have small, neutral side chains.</text>
        <dbReference type="EC" id="3.4.23.36"/>
    </reaction>
</comment>
<comment type="pathway">
    <text evidence="1">Protein modification; lipoprotein biosynthesis (signal peptide cleavage).</text>
</comment>
<comment type="subcellular location">
    <subcellularLocation>
        <location evidence="1">Cell inner membrane</location>
        <topology evidence="1">Multi-pass membrane protein</topology>
    </subcellularLocation>
</comment>
<comment type="similarity">
    <text evidence="1">Belongs to the peptidase A8 family.</text>
</comment>
<keyword id="KW-0064">Aspartyl protease</keyword>
<keyword id="KW-0997">Cell inner membrane</keyword>
<keyword id="KW-1003">Cell membrane</keyword>
<keyword id="KW-0378">Hydrolase</keyword>
<keyword id="KW-0472">Membrane</keyword>
<keyword id="KW-0645">Protease</keyword>
<keyword id="KW-0812">Transmembrane</keyword>
<keyword id="KW-1133">Transmembrane helix</keyword>
<organism>
    <name type="scientific">Burkholderia orbicola (strain MC0-3)</name>
    <dbReference type="NCBI Taxonomy" id="406425"/>
    <lineage>
        <taxon>Bacteria</taxon>
        <taxon>Pseudomonadati</taxon>
        <taxon>Pseudomonadota</taxon>
        <taxon>Betaproteobacteria</taxon>
        <taxon>Burkholderiales</taxon>
        <taxon>Burkholderiaceae</taxon>
        <taxon>Burkholderia</taxon>
        <taxon>Burkholderia cepacia complex</taxon>
        <taxon>Burkholderia orbicola</taxon>
    </lineage>
</organism>
<accession>B1JXC4</accession>
<gene>
    <name evidence="1" type="primary">lspA</name>
    <name type="ordered locus">Bcenmc03_2538</name>
</gene>
<evidence type="ECO:0000255" key="1">
    <source>
        <dbReference type="HAMAP-Rule" id="MF_00161"/>
    </source>
</evidence>
<proteinExistence type="inferred from homology"/>